<dbReference type="EC" id="3.4.21.92" evidence="1"/>
<dbReference type="EMBL" id="BA000030">
    <property type="protein sequence ID" value="BAC73159.1"/>
    <property type="molecule type" value="Genomic_DNA"/>
</dbReference>
<dbReference type="SMR" id="Q82CA6"/>
<dbReference type="MEROPS" id="S14.008"/>
<dbReference type="KEGG" id="sma:SAVERM_5447"/>
<dbReference type="eggNOG" id="COG0740">
    <property type="taxonomic scope" value="Bacteria"/>
</dbReference>
<dbReference type="HOGENOM" id="CLU_058707_4_1_11"/>
<dbReference type="OrthoDB" id="9802800at2"/>
<dbReference type="Proteomes" id="UP000000428">
    <property type="component" value="Chromosome"/>
</dbReference>
<dbReference type="GO" id="GO:0005737">
    <property type="term" value="C:cytoplasm"/>
    <property type="evidence" value="ECO:0007669"/>
    <property type="project" value="UniProtKB-SubCell"/>
</dbReference>
<dbReference type="GO" id="GO:0009368">
    <property type="term" value="C:endopeptidase Clp complex"/>
    <property type="evidence" value="ECO:0007669"/>
    <property type="project" value="TreeGrafter"/>
</dbReference>
<dbReference type="GO" id="GO:0004176">
    <property type="term" value="F:ATP-dependent peptidase activity"/>
    <property type="evidence" value="ECO:0007669"/>
    <property type="project" value="InterPro"/>
</dbReference>
<dbReference type="GO" id="GO:0051117">
    <property type="term" value="F:ATPase binding"/>
    <property type="evidence" value="ECO:0007669"/>
    <property type="project" value="TreeGrafter"/>
</dbReference>
<dbReference type="GO" id="GO:0004252">
    <property type="term" value="F:serine-type endopeptidase activity"/>
    <property type="evidence" value="ECO:0007669"/>
    <property type="project" value="UniProtKB-UniRule"/>
</dbReference>
<dbReference type="GO" id="GO:0006515">
    <property type="term" value="P:protein quality control for misfolded or incompletely synthesized proteins"/>
    <property type="evidence" value="ECO:0007669"/>
    <property type="project" value="TreeGrafter"/>
</dbReference>
<dbReference type="CDD" id="cd07017">
    <property type="entry name" value="S14_ClpP_2"/>
    <property type="match status" value="1"/>
</dbReference>
<dbReference type="FunFam" id="3.90.226.10:FF:000002">
    <property type="entry name" value="ATP-dependent Clp protease proteolytic subunit"/>
    <property type="match status" value="1"/>
</dbReference>
<dbReference type="Gene3D" id="3.90.226.10">
    <property type="entry name" value="2-enoyl-CoA Hydratase, Chain A, domain 1"/>
    <property type="match status" value="1"/>
</dbReference>
<dbReference type="HAMAP" id="MF_00444">
    <property type="entry name" value="ClpP"/>
    <property type="match status" value="1"/>
</dbReference>
<dbReference type="InterPro" id="IPR001907">
    <property type="entry name" value="ClpP"/>
</dbReference>
<dbReference type="InterPro" id="IPR029045">
    <property type="entry name" value="ClpP/crotonase-like_dom_sf"/>
</dbReference>
<dbReference type="InterPro" id="IPR023562">
    <property type="entry name" value="ClpP/TepA"/>
</dbReference>
<dbReference type="InterPro" id="IPR033135">
    <property type="entry name" value="ClpP_His_AS"/>
</dbReference>
<dbReference type="NCBIfam" id="NF001368">
    <property type="entry name" value="PRK00277.1"/>
    <property type="match status" value="1"/>
</dbReference>
<dbReference type="NCBIfam" id="NF009205">
    <property type="entry name" value="PRK12553.1"/>
    <property type="match status" value="1"/>
</dbReference>
<dbReference type="PANTHER" id="PTHR10381">
    <property type="entry name" value="ATP-DEPENDENT CLP PROTEASE PROTEOLYTIC SUBUNIT"/>
    <property type="match status" value="1"/>
</dbReference>
<dbReference type="PANTHER" id="PTHR10381:SF70">
    <property type="entry name" value="ATP-DEPENDENT CLP PROTEASE PROTEOLYTIC SUBUNIT"/>
    <property type="match status" value="1"/>
</dbReference>
<dbReference type="Pfam" id="PF00574">
    <property type="entry name" value="CLP_protease"/>
    <property type="match status" value="1"/>
</dbReference>
<dbReference type="PRINTS" id="PR00127">
    <property type="entry name" value="CLPPROTEASEP"/>
</dbReference>
<dbReference type="SUPFAM" id="SSF52096">
    <property type="entry name" value="ClpP/crotonase"/>
    <property type="match status" value="1"/>
</dbReference>
<dbReference type="PROSITE" id="PS00382">
    <property type="entry name" value="CLP_PROTEASE_HIS"/>
    <property type="match status" value="1"/>
</dbReference>
<keyword id="KW-0963">Cytoplasm</keyword>
<keyword id="KW-0378">Hydrolase</keyword>
<keyword id="KW-0645">Protease</keyword>
<keyword id="KW-1185">Reference proteome</keyword>
<keyword id="KW-0720">Serine protease</keyword>
<gene>
    <name evidence="1" type="primary">clpP3</name>
    <name type="ordered locus">SAV_5447</name>
</gene>
<sequence length="219" mass="23205">MRRPGAVVRRAGGYVTNLMPTAAGDPIGGGLGDQVYNRLLGERIIFLGQAVDDDIANKITAQLLLLASDPDKDIYLYINSPGGSITAGMAIYDTMQYIKNDVVTIAMGMAASMGQFLLSAGTPGKRFALPNAEILIHQPSAGLAGSASDIKIHAERLLHTKKRMAELTAFHTGQTVEQVTRDSDRDRWFDPVEAKEYGLIDDIMPTAAGMPGGGGTGAA</sequence>
<feature type="chain" id="PRO_0000179661" description="ATP-dependent Clp protease proteolytic subunit 3">
    <location>
        <begin position="1"/>
        <end position="219"/>
    </location>
</feature>
<feature type="active site" description="Nucleophile" evidence="1">
    <location>
        <position position="112"/>
    </location>
</feature>
<feature type="active site" evidence="1">
    <location>
        <position position="137"/>
    </location>
</feature>
<name>CLPP3_STRAW</name>
<proteinExistence type="inferred from homology"/>
<protein>
    <recommendedName>
        <fullName evidence="1">ATP-dependent Clp protease proteolytic subunit 3</fullName>
        <ecNumber evidence="1">3.4.21.92</ecNumber>
    </recommendedName>
    <alternativeName>
        <fullName evidence="1">Endopeptidase Clp 3</fullName>
    </alternativeName>
</protein>
<organism>
    <name type="scientific">Streptomyces avermitilis (strain ATCC 31267 / DSM 46492 / JCM 5070 / NBRC 14893 / NCIMB 12804 / NRRL 8165 / MA-4680)</name>
    <dbReference type="NCBI Taxonomy" id="227882"/>
    <lineage>
        <taxon>Bacteria</taxon>
        <taxon>Bacillati</taxon>
        <taxon>Actinomycetota</taxon>
        <taxon>Actinomycetes</taxon>
        <taxon>Kitasatosporales</taxon>
        <taxon>Streptomycetaceae</taxon>
        <taxon>Streptomyces</taxon>
    </lineage>
</organism>
<reference key="1">
    <citation type="journal article" date="2001" name="Proc. Natl. Acad. Sci. U.S.A.">
        <title>Genome sequence of an industrial microorganism Streptomyces avermitilis: deducing the ability of producing secondary metabolites.</title>
        <authorList>
            <person name="Omura S."/>
            <person name="Ikeda H."/>
            <person name="Ishikawa J."/>
            <person name="Hanamoto A."/>
            <person name="Takahashi C."/>
            <person name="Shinose M."/>
            <person name="Takahashi Y."/>
            <person name="Horikawa H."/>
            <person name="Nakazawa H."/>
            <person name="Osonoe T."/>
            <person name="Kikuchi H."/>
            <person name="Shiba T."/>
            <person name="Sakaki Y."/>
            <person name="Hattori M."/>
        </authorList>
    </citation>
    <scope>NUCLEOTIDE SEQUENCE [LARGE SCALE GENOMIC DNA]</scope>
    <source>
        <strain>ATCC 31267 / DSM 46492 / JCM 5070 / NBRC 14893 / NCIMB 12804 / NRRL 8165 / MA-4680</strain>
    </source>
</reference>
<reference key="2">
    <citation type="journal article" date="2003" name="Nat. Biotechnol.">
        <title>Complete genome sequence and comparative analysis of the industrial microorganism Streptomyces avermitilis.</title>
        <authorList>
            <person name="Ikeda H."/>
            <person name="Ishikawa J."/>
            <person name="Hanamoto A."/>
            <person name="Shinose M."/>
            <person name="Kikuchi H."/>
            <person name="Shiba T."/>
            <person name="Sakaki Y."/>
            <person name="Hattori M."/>
            <person name="Omura S."/>
        </authorList>
    </citation>
    <scope>NUCLEOTIDE SEQUENCE [LARGE SCALE GENOMIC DNA]</scope>
    <source>
        <strain>ATCC 31267 / DSM 46492 / JCM 5070 / NBRC 14893 / NCIMB 12804 / NRRL 8165 / MA-4680</strain>
    </source>
</reference>
<evidence type="ECO:0000255" key="1">
    <source>
        <dbReference type="HAMAP-Rule" id="MF_00444"/>
    </source>
</evidence>
<comment type="function">
    <text evidence="1">Cleaves peptides in various proteins in a process that requires ATP hydrolysis. Has a chymotrypsin-like activity. Plays a major role in the degradation of misfolded proteins.</text>
</comment>
<comment type="catalytic activity">
    <reaction evidence="1">
        <text>Hydrolysis of proteins to small peptides in the presence of ATP and magnesium. alpha-casein is the usual test substrate. In the absence of ATP, only oligopeptides shorter than five residues are hydrolyzed (such as succinyl-Leu-Tyr-|-NHMec, and Leu-Tyr-Leu-|-Tyr-Trp, in which cleavage of the -Tyr-|-Leu- and -Tyr-|-Trp bonds also occurs).</text>
        <dbReference type="EC" id="3.4.21.92"/>
    </reaction>
</comment>
<comment type="subunit">
    <text evidence="1">Fourteen ClpP subunits assemble into 2 heptameric rings which stack back to back to give a disk-like structure with a central cavity, resembling the structure of eukaryotic proteasomes.</text>
</comment>
<comment type="subcellular location">
    <subcellularLocation>
        <location evidence="1">Cytoplasm</location>
    </subcellularLocation>
</comment>
<comment type="similarity">
    <text evidence="1">Belongs to the peptidase S14 family.</text>
</comment>
<accession>Q82CA6</accession>